<protein>
    <recommendedName>
        <fullName evidence="1">Large ribosomal subunit protein bL9</fullName>
    </recommendedName>
    <alternativeName>
        <fullName evidence="2">50S ribosomal protein L9</fullName>
    </alternativeName>
</protein>
<evidence type="ECO:0000255" key="1">
    <source>
        <dbReference type="HAMAP-Rule" id="MF_00503"/>
    </source>
</evidence>
<evidence type="ECO:0000305" key="2"/>
<comment type="function">
    <text evidence="1">Binds to the 23S rRNA.</text>
</comment>
<comment type="similarity">
    <text evidence="1">Belongs to the bacterial ribosomal protein bL9 family.</text>
</comment>
<feature type="chain" id="PRO_1000014733" description="Large ribosomal subunit protein bL9">
    <location>
        <begin position="1"/>
        <end position="148"/>
    </location>
</feature>
<accession>A4SIZ9</accession>
<keyword id="KW-0687">Ribonucleoprotein</keyword>
<keyword id="KW-0689">Ribosomal protein</keyword>
<keyword id="KW-0694">RNA-binding</keyword>
<keyword id="KW-0699">rRNA-binding</keyword>
<reference key="1">
    <citation type="journal article" date="2008" name="BMC Genomics">
        <title>The genome of Aeromonas salmonicida subsp. salmonicida A449: insights into the evolution of a fish pathogen.</title>
        <authorList>
            <person name="Reith M.E."/>
            <person name="Singh R.K."/>
            <person name="Curtis B."/>
            <person name="Boyd J.M."/>
            <person name="Bouevitch A."/>
            <person name="Kimball J."/>
            <person name="Munholland J."/>
            <person name="Murphy C."/>
            <person name="Sarty D."/>
            <person name="Williams J."/>
            <person name="Nash J.H."/>
            <person name="Johnson S.C."/>
            <person name="Brown L.L."/>
        </authorList>
    </citation>
    <scope>NUCLEOTIDE SEQUENCE [LARGE SCALE GENOMIC DNA]</scope>
    <source>
        <strain>A449</strain>
    </source>
</reference>
<name>RL9_AERS4</name>
<sequence>MQVILLDKIAKLGGLGDQVAVKAGYARNYLIPQGKAVMATKANIETFDARRAELEAKLAAGKAAAEERAAKLGELAAVVIASKAGDEGKLFGSIGTRDVADAITAAGVAVAKSEVRMGNVLRNTGEYEVVVQLHADVKATVQVQVVAL</sequence>
<dbReference type="EMBL" id="CP000644">
    <property type="protein sequence ID" value="ABO88871.1"/>
    <property type="molecule type" value="Genomic_DNA"/>
</dbReference>
<dbReference type="RefSeq" id="WP_005313386.1">
    <property type="nucleotide sequence ID" value="NC_009348.1"/>
</dbReference>
<dbReference type="SMR" id="A4SIZ9"/>
<dbReference type="STRING" id="29491.GCA_000820065_01783"/>
<dbReference type="GeneID" id="79878252"/>
<dbReference type="KEGG" id="asa:ASA_0709"/>
<dbReference type="eggNOG" id="COG0359">
    <property type="taxonomic scope" value="Bacteria"/>
</dbReference>
<dbReference type="HOGENOM" id="CLU_078938_4_1_6"/>
<dbReference type="Proteomes" id="UP000000225">
    <property type="component" value="Chromosome"/>
</dbReference>
<dbReference type="GO" id="GO:1990904">
    <property type="term" value="C:ribonucleoprotein complex"/>
    <property type="evidence" value="ECO:0007669"/>
    <property type="project" value="UniProtKB-KW"/>
</dbReference>
<dbReference type="GO" id="GO:0005840">
    <property type="term" value="C:ribosome"/>
    <property type="evidence" value="ECO:0007669"/>
    <property type="project" value="UniProtKB-KW"/>
</dbReference>
<dbReference type="GO" id="GO:0019843">
    <property type="term" value="F:rRNA binding"/>
    <property type="evidence" value="ECO:0007669"/>
    <property type="project" value="UniProtKB-UniRule"/>
</dbReference>
<dbReference type="GO" id="GO:0003735">
    <property type="term" value="F:structural constituent of ribosome"/>
    <property type="evidence" value="ECO:0007669"/>
    <property type="project" value="InterPro"/>
</dbReference>
<dbReference type="GO" id="GO:0006412">
    <property type="term" value="P:translation"/>
    <property type="evidence" value="ECO:0007669"/>
    <property type="project" value="UniProtKB-UniRule"/>
</dbReference>
<dbReference type="FunFam" id="3.40.5.10:FF:000001">
    <property type="entry name" value="50S ribosomal protein L9"/>
    <property type="match status" value="1"/>
</dbReference>
<dbReference type="Gene3D" id="3.10.430.100">
    <property type="entry name" value="Ribosomal protein L9, C-terminal domain"/>
    <property type="match status" value="1"/>
</dbReference>
<dbReference type="Gene3D" id="3.40.5.10">
    <property type="entry name" value="Ribosomal protein L9, N-terminal domain"/>
    <property type="match status" value="1"/>
</dbReference>
<dbReference type="HAMAP" id="MF_00503">
    <property type="entry name" value="Ribosomal_bL9"/>
    <property type="match status" value="1"/>
</dbReference>
<dbReference type="InterPro" id="IPR000244">
    <property type="entry name" value="Ribosomal_bL9"/>
</dbReference>
<dbReference type="InterPro" id="IPR009027">
    <property type="entry name" value="Ribosomal_bL9/RNase_H1_N"/>
</dbReference>
<dbReference type="InterPro" id="IPR020594">
    <property type="entry name" value="Ribosomal_bL9_bac/chp"/>
</dbReference>
<dbReference type="InterPro" id="IPR020069">
    <property type="entry name" value="Ribosomal_bL9_C"/>
</dbReference>
<dbReference type="InterPro" id="IPR036791">
    <property type="entry name" value="Ribosomal_bL9_C_sf"/>
</dbReference>
<dbReference type="InterPro" id="IPR020070">
    <property type="entry name" value="Ribosomal_bL9_N"/>
</dbReference>
<dbReference type="InterPro" id="IPR036935">
    <property type="entry name" value="Ribosomal_bL9_N_sf"/>
</dbReference>
<dbReference type="NCBIfam" id="TIGR00158">
    <property type="entry name" value="L9"/>
    <property type="match status" value="1"/>
</dbReference>
<dbReference type="PANTHER" id="PTHR21368">
    <property type="entry name" value="50S RIBOSOMAL PROTEIN L9"/>
    <property type="match status" value="1"/>
</dbReference>
<dbReference type="Pfam" id="PF03948">
    <property type="entry name" value="Ribosomal_L9_C"/>
    <property type="match status" value="1"/>
</dbReference>
<dbReference type="Pfam" id="PF01281">
    <property type="entry name" value="Ribosomal_L9_N"/>
    <property type="match status" value="1"/>
</dbReference>
<dbReference type="SUPFAM" id="SSF55658">
    <property type="entry name" value="L9 N-domain-like"/>
    <property type="match status" value="1"/>
</dbReference>
<dbReference type="SUPFAM" id="SSF55653">
    <property type="entry name" value="Ribosomal protein L9 C-domain"/>
    <property type="match status" value="1"/>
</dbReference>
<dbReference type="PROSITE" id="PS00651">
    <property type="entry name" value="RIBOSOMAL_L9"/>
    <property type="match status" value="1"/>
</dbReference>
<organism>
    <name type="scientific">Aeromonas salmonicida (strain A449)</name>
    <dbReference type="NCBI Taxonomy" id="382245"/>
    <lineage>
        <taxon>Bacteria</taxon>
        <taxon>Pseudomonadati</taxon>
        <taxon>Pseudomonadota</taxon>
        <taxon>Gammaproteobacteria</taxon>
        <taxon>Aeromonadales</taxon>
        <taxon>Aeromonadaceae</taxon>
        <taxon>Aeromonas</taxon>
    </lineage>
</organism>
<proteinExistence type="inferred from homology"/>
<gene>
    <name evidence="1" type="primary">rplI</name>
    <name type="ordered locus">ASA_0709</name>
</gene>